<reference key="1">
    <citation type="journal article" date="2004" name="Genome Res.">
        <title>The status, quality, and expansion of the NIH full-length cDNA project: the Mammalian Gene Collection (MGC).</title>
        <authorList>
            <consortium name="The MGC Project Team"/>
        </authorList>
    </citation>
    <scope>NUCLEOTIDE SEQUENCE [LARGE SCALE MRNA]</scope>
    <source>
        <tissue>Testis</tissue>
    </source>
</reference>
<accession>Q6AY23</accession>
<sequence length="320" mass="33673">MSVGFIGAGQLACALARGFTAAGVLSAHKIIASSPEMDLPTVSALRKMGVNLTRSNKDTVRHSDVLFLAVKPHIIPFILDEIGADVQERHIVVSCAAGVTISSVEKKLMAFQPAPKVIRCMTNTPVVVREGATVYATGTHALVEDGKLLEQLMSSVGFCTEVEEDLIDAITGLSGSGPAYAFMALDALADGGVKMGVPRRLAVRLGAQALLGAAKMLLDSEDHPGQLKDNVCSPGGATIHALHFLESGGFRSLLINAVEASCIRTRELQSMADQEKVSPAALKKTLLDRVKLESPTVSTLAPPSSGKLLTRNPAQGSKRE</sequence>
<organism>
    <name type="scientific">Rattus norvegicus</name>
    <name type="common">Rat</name>
    <dbReference type="NCBI Taxonomy" id="10116"/>
    <lineage>
        <taxon>Eukaryota</taxon>
        <taxon>Metazoa</taxon>
        <taxon>Chordata</taxon>
        <taxon>Craniata</taxon>
        <taxon>Vertebrata</taxon>
        <taxon>Euteleostomi</taxon>
        <taxon>Mammalia</taxon>
        <taxon>Eutheria</taxon>
        <taxon>Euarchontoglires</taxon>
        <taxon>Glires</taxon>
        <taxon>Rodentia</taxon>
        <taxon>Myomorpha</taxon>
        <taxon>Muroidea</taxon>
        <taxon>Muridae</taxon>
        <taxon>Murinae</taxon>
        <taxon>Rattus</taxon>
    </lineage>
</organism>
<gene>
    <name evidence="5" type="primary">Pycr2</name>
</gene>
<comment type="function">
    <text evidence="2">Oxidoreductase that catalyzes the last step in proline biosynthesis, which corresponds to the reduction of pyrroline-5-carboxylate to L-proline using NAD(P)H. At physiologic concentrations, has higher specific activity in the presence of NADH. Involved in cellular response to oxidative stress. In some cell types, such as erythrocytes, its primary function may be the generation of NADP(+).</text>
</comment>
<comment type="catalytic activity">
    <reaction evidence="2">
        <text>L-proline + NADP(+) = (S)-1-pyrroline-5-carboxylate + NADPH + 2 H(+)</text>
        <dbReference type="Rhea" id="RHEA:14109"/>
        <dbReference type="ChEBI" id="CHEBI:15378"/>
        <dbReference type="ChEBI" id="CHEBI:17388"/>
        <dbReference type="ChEBI" id="CHEBI:57783"/>
        <dbReference type="ChEBI" id="CHEBI:58349"/>
        <dbReference type="ChEBI" id="CHEBI:60039"/>
        <dbReference type="EC" id="1.5.1.2"/>
    </reaction>
    <physiologicalReaction direction="right-to-left" evidence="2">
        <dbReference type="Rhea" id="RHEA:14111"/>
    </physiologicalReaction>
</comment>
<comment type="catalytic activity">
    <reaction evidence="2">
        <text>L-proline + NAD(+) = (S)-1-pyrroline-5-carboxylate + NADH + 2 H(+)</text>
        <dbReference type="Rhea" id="RHEA:14105"/>
        <dbReference type="ChEBI" id="CHEBI:15378"/>
        <dbReference type="ChEBI" id="CHEBI:17388"/>
        <dbReference type="ChEBI" id="CHEBI:57540"/>
        <dbReference type="ChEBI" id="CHEBI:57945"/>
        <dbReference type="ChEBI" id="CHEBI:60039"/>
        <dbReference type="EC" id="1.5.1.2"/>
    </reaction>
    <physiologicalReaction direction="right-to-left" evidence="2">
        <dbReference type="Rhea" id="RHEA:14107"/>
    </physiologicalReaction>
</comment>
<comment type="pathway">
    <text>Amino-acid biosynthesis; L-proline biosynthesis; L-proline from L-glutamate 5-semialdehyde: step 1/1.</text>
</comment>
<comment type="subunit">
    <text evidence="2">Homodecamer; composed of 5 homodimers. Interacts with LTO1.</text>
</comment>
<comment type="subcellular location">
    <subcellularLocation>
        <location evidence="2">Cytoplasm</location>
    </subcellularLocation>
    <subcellularLocation>
        <location evidence="2">Mitochondrion</location>
    </subcellularLocation>
</comment>
<comment type="similarity">
    <text evidence="4">Belongs to the pyrroline-5-carboxylate reductase family.</text>
</comment>
<protein>
    <recommendedName>
        <fullName>Pyrroline-5-carboxylate reductase 2</fullName>
        <shortName>P5C reductase 2</shortName>
        <shortName>P5CR 2</shortName>
        <ecNumber evidence="2">1.5.1.2</ecNumber>
    </recommendedName>
</protein>
<name>P5CR2_RAT</name>
<feature type="initiator methionine" description="Removed" evidence="2">
    <location>
        <position position="1"/>
    </location>
</feature>
<feature type="chain" id="PRO_0000187320" description="Pyrroline-5-carboxylate reductase 2">
    <location>
        <begin position="2"/>
        <end position="320"/>
    </location>
</feature>
<feature type="region of interest" description="Disordered" evidence="3">
    <location>
        <begin position="293"/>
        <end position="320"/>
    </location>
</feature>
<feature type="binding site" evidence="1">
    <location>
        <begin position="6"/>
        <end position="11"/>
    </location>
    <ligand>
        <name>NADP(+)</name>
        <dbReference type="ChEBI" id="CHEBI:58349"/>
    </ligand>
</feature>
<feature type="binding site" evidence="1">
    <location>
        <position position="8"/>
    </location>
    <ligand>
        <name>NADPH</name>
        <dbReference type="ChEBI" id="CHEBI:57783"/>
    </ligand>
</feature>
<feature type="binding site" evidence="1">
    <location>
        <position position="10"/>
    </location>
    <ligand>
        <name>NADPH</name>
        <dbReference type="ChEBI" id="CHEBI:57783"/>
    </ligand>
</feature>
<feature type="binding site" evidence="1">
    <location>
        <position position="11"/>
    </location>
    <ligand>
        <name>NADPH</name>
        <dbReference type="ChEBI" id="CHEBI:57783"/>
    </ligand>
</feature>
<feature type="binding site" evidence="1">
    <location>
        <position position="34"/>
    </location>
    <ligand>
        <name>NADP(+)</name>
        <dbReference type="ChEBI" id="CHEBI:58349"/>
    </ligand>
</feature>
<feature type="binding site" evidence="1">
    <location>
        <position position="34"/>
    </location>
    <ligand>
        <name>NADPH</name>
        <dbReference type="ChEBI" id="CHEBI:57783"/>
    </ligand>
</feature>
<feature type="binding site" evidence="1">
    <location>
        <position position="36"/>
    </location>
    <ligand>
        <name>NADPH</name>
        <dbReference type="ChEBI" id="CHEBI:57783"/>
    </ligand>
</feature>
<feature type="binding site" evidence="1">
    <location>
        <position position="56"/>
    </location>
    <ligand>
        <name>NADP(+)</name>
        <dbReference type="ChEBI" id="CHEBI:58349"/>
    </ligand>
</feature>
<feature type="binding site" evidence="1">
    <location>
        <position position="56"/>
    </location>
    <ligand>
        <name>NADPH</name>
        <dbReference type="ChEBI" id="CHEBI:57783"/>
    </ligand>
</feature>
<feature type="binding site" evidence="1">
    <location>
        <begin position="69"/>
        <end position="72"/>
    </location>
    <ligand>
        <name>NADP(+)</name>
        <dbReference type="ChEBI" id="CHEBI:58349"/>
    </ligand>
</feature>
<feature type="binding site" evidence="1">
    <location>
        <position position="70"/>
    </location>
    <ligand>
        <name>NADPH</name>
        <dbReference type="ChEBI" id="CHEBI:57783"/>
    </ligand>
</feature>
<feature type="binding site" evidence="1">
    <location>
        <position position="71"/>
    </location>
    <ligand>
        <name>NADPH</name>
        <dbReference type="ChEBI" id="CHEBI:57783"/>
    </ligand>
</feature>
<feature type="binding site" evidence="1">
    <location>
        <begin position="95"/>
        <end position="97"/>
    </location>
    <ligand>
        <name>NADP(+)</name>
        <dbReference type="ChEBI" id="CHEBI:58349"/>
    </ligand>
</feature>
<feature type="binding site" evidence="1">
    <location>
        <position position="97"/>
    </location>
    <ligand>
        <name>NADPH</name>
        <dbReference type="ChEBI" id="CHEBI:57783"/>
    </ligand>
</feature>
<feature type="binding site" evidence="1">
    <location>
        <position position="164"/>
    </location>
    <ligand>
        <name>L-proline</name>
        <dbReference type="ChEBI" id="CHEBI:60039"/>
    </ligand>
</feature>
<feature type="binding site" evidence="1">
    <location>
        <position position="230"/>
    </location>
    <ligand>
        <name>NADPH</name>
        <dbReference type="ChEBI" id="CHEBI:57783"/>
    </ligand>
</feature>
<feature type="binding site" evidence="1">
    <location>
        <position position="237"/>
    </location>
    <ligand>
        <name>L-proline</name>
        <dbReference type="ChEBI" id="CHEBI:60039"/>
    </ligand>
</feature>
<feature type="binding site" evidence="1">
    <location>
        <position position="238"/>
    </location>
    <ligand>
        <name>L-proline</name>
        <dbReference type="ChEBI" id="CHEBI:60039"/>
    </ligand>
</feature>
<feature type="modified residue" description="N-acetylserine" evidence="2">
    <location>
        <position position="2"/>
    </location>
</feature>
<feature type="modified residue" description="Phosphoserine" evidence="2">
    <location>
        <position position="304"/>
    </location>
</feature>
<proteinExistence type="evidence at transcript level"/>
<dbReference type="EC" id="1.5.1.2" evidence="2"/>
<dbReference type="EMBL" id="BC079222">
    <property type="protein sequence ID" value="AAH79222.1"/>
    <property type="molecule type" value="mRNA"/>
</dbReference>
<dbReference type="RefSeq" id="NP_001012208.1">
    <property type="nucleotide sequence ID" value="NM_001012208.1"/>
</dbReference>
<dbReference type="SMR" id="Q6AY23"/>
<dbReference type="FunCoup" id="Q6AY23">
    <property type="interactions" value="1441"/>
</dbReference>
<dbReference type="IntAct" id="Q6AY23">
    <property type="interactions" value="2"/>
</dbReference>
<dbReference type="MINT" id="Q6AY23"/>
<dbReference type="STRING" id="10116.ENSRNOP00000004379"/>
<dbReference type="iPTMnet" id="Q6AY23"/>
<dbReference type="PhosphoSitePlus" id="Q6AY23"/>
<dbReference type="jPOST" id="Q6AY23"/>
<dbReference type="PaxDb" id="10116-ENSRNOP00000004379"/>
<dbReference type="GeneID" id="364064"/>
<dbReference type="KEGG" id="rno:364064"/>
<dbReference type="AGR" id="RGD:1310074"/>
<dbReference type="CTD" id="29920"/>
<dbReference type="RGD" id="1310074">
    <property type="gene designation" value="Pycr2"/>
</dbReference>
<dbReference type="VEuPathDB" id="HostDB:ENSRNOG00000003267"/>
<dbReference type="eggNOG" id="KOG3124">
    <property type="taxonomic scope" value="Eukaryota"/>
</dbReference>
<dbReference type="HOGENOM" id="CLU_042344_3_0_1"/>
<dbReference type="InParanoid" id="Q6AY23"/>
<dbReference type="OrthoDB" id="10263291at2759"/>
<dbReference type="PhylomeDB" id="Q6AY23"/>
<dbReference type="Reactome" id="R-RNO-8964539">
    <property type="pathway name" value="Glutamate and glutamine metabolism"/>
</dbReference>
<dbReference type="SABIO-RK" id="Q6AY23"/>
<dbReference type="UniPathway" id="UPA00098">
    <property type="reaction ID" value="UER00361"/>
</dbReference>
<dbReference type="PRO" id="PR:Q6AY23"/>
<dbReference type="Proteomes" id="UP000002494">
    <property type="component" value="Chromosome 13"/>
</dbReference>
<dbReference type="Bgee" id="ENSRNOG00000003267">
    <property type="expression patterns" value="Expressed in pancreas and 20 other cell types or tissues"/>
</dbReference>
<dbReference type="GO" id="GO:0005739">
    <property type="term" value="C:mitochondrion"/>
    <property type="evidence" value="ECO:0000250"/>
    <property type="project" value="UniProtKB"/>
</dbReference>
<dbReference type="GO" id="GO:0004735">
    <property type="term" value="F:pyrroline-5-carboxylate reductase activity"/>
    <property type="evidence" value="ECO:0000250"/>
    <property type="project" value="UniProtKB"/>
</dbReference>
<dbReference type="GO" id="GO:0034599">
    <property type="term" value="P:cellular response to oxidative stress"/>
    <property type="evidence" value="ECO:0000250"/>
    <property type="project" value="UniProtKB"/>
</dbReference>
<dbReference type="GO" id="GO:0055129">
    <property type="term" value="P:L-proline biosynthetic process"/>
    <property type="evidence" value="ECO:0000318"/>
    <property type="project" value="GO_Central"/>
</dbReference>
<dbReference type="GO" id="GO:0006561">
    <property type="term" value="P:proline biosynthetic process"/>
    <property type="evidence" value="ECO:0000250"/>
    <property type="project" value="UniProtKB"/>
</dbReference>
<dbReference type="FunFam" id="3.40.50.720:FF:000064">
    <property type="entry name" value="Pyrroline-5-carboxylate reductase 1"/>
    <property type="match status" value="1"/>
</dbReference>
<dbReference type="FunFam" id="1.10.3730.10:FF:000003">
    <property type="entry name" value="Pyrroline-5-carboxylate reductase 1, mitochondrial"/>
    <property type="match status" value="1"/>
</dbReference>
<dbReference type="Gene3D" id="3.40.50.720">
    <property type="entry name" value="NAD(P)-binding Rossmann-like Domain"/>
    <property type="match status" value="1"/>
</dbReference>
<dbReference type="Gene3D" id="1.10.3730.10">
    <property type="entry name" value="ProC C-terminal domain-like"/>
    <property type="match status" value="1"/>
</dbReference>
<dbReference type="HAMAP" id="MF_01925">
    <property type="entry name" value="P5C_reductase"/>
    <property type="match status" value="1"/>
</dbReference>
<dbReference type="InterPro" id="IPR008927">
    <property type="entry name" value="6-PGluconate_DH-like_C_sf"/>
</dbReference>
<dbReference type="InterPro" id="IPR036291">
    <property type="entry name" value="NAD(P)-bd_dom_sf"/>
</dbReference>
<dbReference type="InterPro" id="IPR028939">
    <property type="entry name" value="P5C_Rdtase_cat_N"/>
</dbReference>
<dbReference type="InterPro" id="IPR053790">
    <property type="entry name" value="P5CR-like_CS"/>
</dbReference>
<dbReference type="InterPro" id="IPR029036">
    <property type="entry name" value="P5CR_dimer"/>
</dbReference>
<dbReference type="InterPro" id="IPR000304">
    <property type="entry name" value="Pyrroline-COOH_reductase"/>
</dbReference>
<dbReference type="NCBIfam" id="TIGR00112">
    <property type="entry name" value="proC"/>
    <property type="match status" value="1"/>
</dbReference>
<dbReference type="PANTHER" id="PTHR11645">
    <property type="entry name" value="PYRROLINE-5-CARBOXYLATE REDUCTASE"/>
    <property type="match status" value="1"/>
</dbReference>
<dbReference type="PANTHER" id="PTHR11645:SF61">
    <property type="entry name" value="PYRROLINE-5-CARBOXYLATE REDUCTASE 2"/>
    <property type="match status" value="1"/>
</dbReference>
<dbReference type="Pfam" id="PF03807">
    <property type="entry name" value="F420_oxidored"/>
    <property type="match status" value="1"/>
</dbReference>
<dbReference type="Pfam" id="PF14748">
    <property type="entry name" value="P5CR_dimer"/>
    <property type="match status" value="1"/>
</dbReference>
<dbReference type="PIRSF" id="PIRSF000193">
    <property type="entry name" value="Pyrrol-5-carb_rd"/>
    <property type="match status" value="1"/>
</dbReference>
<dbReference type="SUPFAM" id="SSF48179">
    <property type="entry name" value="6-phosphogluconate dehydrogenase C-terminal domain-like"/>
    <property type="match status" value="1"/>
</dbReference>
<dbReference type="SUPFAM" id="SSF51735">
    <property type="entry name" value="NAD(P)-binding Rossmann-fold domains"/>
    <property type="match status" value="1"/>
</dbReference>
<dbReference type="PROSITE" id="PS00521">
    <property type="entry name" value="P5CR"/>
    <property type="match status" value="1"/>
</dbReference>
<evidence type="ECO:0000250" key="1">
    <source>
        <dbReference type="UniProtKB" id="P32322"/>
    </source>
</evidence>
<evidence type="ECO:0000250" key="2">
    <source>
        <dbReference type="UniProtKB" id="Q96C36"/>
    </source>
</evidence>
<evidence type="ECO:0000256" key="3">
    <source>
        <dbReference type="SAM" id="MobiDB-lite"/>
    </source>
</evidence>
<evidence type="ECO:0000305" key="4"/>
<evidence type="ECO:0000312" key="5">
    <source>
        <dbReference type="RGD" id="1310074"/>
    </source>
</evidence>
<keyword id="KW-0007">Acetylation</keyword>
<keyword id="KW-0028">Amino-acid biosynthesis</keyword>
<keyword id="KW-0963">Cytoplasm</keyword>
<keyword id="KW-0496">Mitochondrion</keyword>
<keyword id="KW-0521">NADP</keyword>
<keyword id="KW-0560">Oxidoreductase</keyword>
<keyword id="KW-0597">Phosphoprotein</keyword>
<keyword id="KW-0641">Proline biosynthesis</keyword>
<keyword id="KW-1185">Reference proteome</keyword>